<feature type="chain" id="PRO_0000094206" description="Elongation factor P">
    <location>
        <begin position="1"/>
        <end position="192"/>
    </location>
</feature>
<evidence type="ECO:0000250" key="1"/>
<evidence type="ECO:0000305" key="2"/>
<dbReference type="EMBL" id="AE000783">
    <property type="protein sequence ID" value="AAC66610.1"/>
    <property type="molecule type" value="Genomic_DNA"/>
</dbReference>
<dbReference type="PIR" id="F70126">
    <property type="entry name" value="F70126"/>
</dbReference>
<dbReference type="RefSeq" id="NP_212348.1">
    <property type="nucleotide sequence ID" value="NC_001318.1"/>
</dbReference>
<dbReference type="RefSeq" id="WP_002656805.1">
    <property type="nucleotide sequence ID" value="NC_001318.1"/>
</dbReference>
<dbReference type="SMR" id="O51232"/>
<dbReference type="STRING" id="224326.BB_0214"/>
<dbReference type="PaxDb" id="224326-BB_0214"/>
<dbReference type="EnsemblBacteria" id="AAC66610">
    <property type="protein sequence ID" value="AAC66610"/>
    <property type="gene ID" value="BB_0214"/>
</dbReference>
<dbReference type="GeneID" id="56567644"/>
<dbReference type="KEGG" id="bbu:BB_0214"/>
<dbReference type="PATRIC" id="fig|224326.49.peg.611"/>
<dbReference type="HOGENOM" id="CLU_074944_0_2_12"/>
<dbReference type="OrthoDB" id="9801844at2"/>
<dbReference type="UniPathway" id="UPA00345"/>
<dbReference type="Proteomes" id="UP000001807">
    <property type="component" value="Chromosome"/>
</dbReference>
<dbReference type="GO" id="GO:0005737">
    <property type="term" value="C:cytoplasm"/>
    <property type="evidence" value="ECO:0007669"/>
    <property type="project" value="UniProtKB-SubCell"/>
</dbReference>
<dbReference type="GO" id="GO:0003746">
    <property type="term" value="F:translation elongation factor activity"/>
    <property type="evidence" value="ECO:0007669"/>
    <property type="project" value="UniProtKB-UniRule"/>
</dbReference>
<dbReference type="GO" id="GO:0043043">
    <property type="term" value="P:peptide biosynthetic process"/>
    <property type="evidence" value="ECO:0007669"/>
    <property type="project" value="InterPro"/>
</dbReference>
<dbReference type="CDD" id="cd04470">
    <property type="entry name" value="S1_EF-P_repeat_1"/>
    <property type="match status" value="1"/>
</dbReference>
<dbReference type="CDD" id="cd05794">
    <property type="entry name" value="S1_EF-P_repeat_2"/>
    <property type="match status" value="1"/>
</dbReference>
<dbReference type="FunFam" id="2.40.50.140:FF:000004">
    <property type="entry name" value="Elongation factor P"/>
    <property type="match status" value="1"/>
</dbReference>
<dbReference type="Gene3D" id="2.30.30.30">
    <property type="match status" value="1"/>
</dbReference>
<dbReference type="Gene3D" id="2.40.50.140">
    <property type="entry name" value="Nucleic acid-binding proteins"/>
    <property type="match status" value="2"/>
</dbReference>
<dbReference type="HAMAP" id="MF_00141">
    <property type="entry name" value="EF_P"/>
    <property type="match status" value="1"/>
</dbReference>
<dbReference type="InterPro" id="IPR015365">
    <property type="entry name" value="Elong-fact-P_C"/>
</dbReference>
<dbReference type="InterPro" id="IPR012340">
    <property type="entry name" value="NA-bd_OB-fold"/>
</dbReference>
<dbReference type="InterPro" id="IPR014722">
    <property type="entry name" value="Rib_uL2_dom2"/>
</dbReference>
<dbReference type="InterPro" id="IPR020599">
    <property type="entry name" value="Transl_elong_fac_P/YeiP"/>
</dbReference>
<dbReference type="InterPro" id="IPR013185">
    <property type="entry name" value="Transl_elong_KOW-like"/>
</dbReference>
<dbReference type="InterPro" id="IPR001059">
    <property type="entry name" value="Transl_elong_P/YeiP_cen"/>
</dbReference>
<dbReference type="InterPro" id="IPR011768">
    <property type="entry name" value="Transl_elongation_fac_P"/>
</dbReference>
<dbReference type="InterPro" id="IPR008991">
    <property type="entry name" value="Translation_prot_SH3-like_sf"/>
</dbReference>
<dbReference type="NCBIfam" id="TIGR00038">
    <property type="entry name" value="efp"/>
    <property type="match status" value="1"/>
</dbReference>
<dbReference type="NCBIfam" id="NF001810">
    <property type="entry name" value="PRK00529.1"/>
    <property type="match status" value="1"/>
</dbReference>
<dbReference type="PANTHER" id="PTHR30053">
    <property type="entry name" value="ELONGATION FACTOR P"/>
    <property type="match status" value="1"/>
</dbReference>
<dbReference type="PANTHER" id="PTHR30053:SF14">
    <property type="entry name" value="TRANSLATION ELONGATION FACTOR KOW-LIKE DOMAIN-CONTAINING PROTEIN"/>
    <property type="match status" value="1"/>
</dbReference>
<dbReference type="Pfam" id="PF01132">
    <property type="entry name" value="EFP"/>
    <property type="match status" value="1"/>
</dbReference>
<dbReference type="Pfam" id="PF08207">
    <property type="entry name" value="EFP_N"/>
    <property type="match status" value="1"/>
</dbReference>
<dbReference type="Pfam" id="PF09285">
    <property type="entry name" value="Elong-fact-P_C"/>
    <property type="match status" value="1"/>
</dbReference>
<dbReference type="PIRSF" id="PIRSF005901">
    <property type="entry name" value="EF-P"/>
    <property type="match status" value="1"/>
</dbReference>
<dbReference type="SMART" id="SM01185">
    <property type="entry name" value="EFP"/>
    <property type="match status" value="1"/>
</dbReference>
<dbReference type="SMART" id="SM00841">
    <property type="entry name" value="Elong-fact-P_C"/>
    <property type="match status" value="1"/>
</dbReference>
<dbReference type="SUPFAM" id="SSF50249">
    <property type="entry name" value="Nucleic acid-binding proteins"/>
    <property type="match status" value="2"/>
</dbReference>
<dbReference type="SUPFAM" id="SSF50104">
    <property type="entry name" value="Translation proteins SH3-like domain"/>
    <property type="match status" value="1"/>
</dbReference>
<gene>
    <name type="primary">efp</name>
    <name type="ordered locus">BB_0214</name>
</gene>
<reference key="1">
    <citation type="journal article" date="1997" name="Nature">
        <title>Genomic sequence of a Lyme disease spirochaete, Borrelia burgdorferi.</title>
        <authorList>
            <person name="Fraser C.M."/>
            <person name="Casjens S."/>
            <person name="Huang W.M."/>
            <person name="Sutton G.G."/>
            <person name="Clayton R.A."/>
            <person name="Lathigra R."/>
            <person name="White O."/>
            <person name="Ketchum K.A."/>
            <person name="Dodson R.J."/>
            <person name="Hickey E.K."/>
            <person name="Gwinn M.L."/>
            <person name="Dougherty B.A."/>
            <person name="Tomb J.-F."/>
            <person name="Fleischmann R.D."/>
            <person name="Richardson D.L."/>
            <person name="Peterson J.D."/>
            <person name="Kerlavage A.R."/>
            <person name="Quackenbush J."/>
            <person name="Salzberg S.L."/>
            <person name="Hanson M."/>
            <person name="van Vugt R."/>
            <person name="Palmer N."/>
            <person name="Adams M.D."/>
            <person name="Gocayne J.D."/>
            <person name="Weidman J.F."/>
            <person name="Utterback T.R."/>
            <person name="Watthey L."/>
            <person name="McDonald L.A."/>
            <person name="Artiach P."/>
            <person name="Bowman C."/>
            <person name="Garland S.A."/>
            <person name="Fujii C."/>
            <person name="Cotton M.D."/>
            <person name="Horst K."/>
            <person name="Roberts K.M."/>
            <person name="Hatch B."/>
            <person name="Smith H.O."/>
            <person name="Venter J.C."/>
        </authorList>
    </citation>
    <scope>NUCLEOTIDE SEQUENCE [LARGE SCALE GENOMIC DNA]</scope>
    <source>
        <strain>ATCC 35210 / DSM 4680 / CIP 102532 / B31</strain>
    </source>
</reference>
<sequence length="192" mass="21413">MAVVKSSEIEKGSFLLIKGAPHIVLEREFSKTGRGGAIVRLKLKNLKNKFVIRETLKGADTAEAIEIYEVSAQYLYKDKDVLVFMDLETYDQVSLDLKESANLQDKVPFLQESEIYSLVTFDNVVIDIKLAPKIAFEVVEVEAAVKGDTVTNAMKNITLNTGLVVKAPLFINVGDKVLINSETKEYAERIKN</sequence>
<accession>O51232</accession>
<keyword id="KW-0963">Cytoplasm</keyword>
<keyword id="KW-0251">Elongation factor</keyword>
<keyword id="KW-0648">Protein biosynthesis</keyword>
<keyword id="KW-1185">Reference proteome</keyword>
<name>EFP_BORBU</name>
<protein>
    <recommendedName>
        <fullName>Elongation factor P</fullName>
        <shortName>EF-P</shortName>
    </recommendedName>
</protein>
<organism>
    <name type="scientific">Borreliella burgdorferi (strain ATCC 35210 / DSM 4680 / CIP 102532 / B31)</name>
    <name type="common">Borrelia burgdorferi</name>
    <dbReference type="NCBI Taxonomy" id="224326"/>
    <lineage>
        <taxon>Bacteria</taxon>
        <taxon>Pseudomonadati</taxon>
        <taxon>Spirochaetota</taxon>
        <taxon>Spirochaetia</taxon>
        <taxon>Spirochaetales</taxon>
        <taxon>Borreliaceae</taxon>
        <taxon>Borreliella</taxon>
    </lineage>
</organism>
<proteinExistence type="inferred from homology"/>
<comment type="function">
    <text evidence="1">Involved in peptide bond synthesis. Stimulates efficient translation and peptide-bond synthesis on native or reconstituted 70S ribosomes in vitro. Probably functions indirectly by altering the affinity of the ribosome for aminoacyl-tRNA, thus increasing their reactivity as acceptors for peptidyl transferase (By similarity).</text>
</comment>
<comment type="pathway">
    <text>Protein biosynthesis; polypeptide chain elongation.</text>
</comment>
<comment type="subcellular location">
    <subcellularLocation>
        <location evidence="1">Cytoplasm</location>
    </subcellularLocation>
</comment>
<comment type="similarity">
    <text evidence="2">Belongs to the elongation factor P family.</text>
</comment>